<comment type="function">
    <text evidence="1 3">Serine/threonine-protein kinase (By similarity). Involved in the control of the cell cycle. Required for entry into S-phase and mitosis (By similarity). Probable component of the kinase complex that phosphorylates the repetitive C-terminus of RNA polymerase II (By similarity).</text>
</comment>
<comment type="catalytic activity">
    <reaction evidence="3">
        <text>L-seryl-[protein] + ATP = O-phospho-L-seryl-[protein] + ADP + H(+)</text>
        <dbReference type="Rhea" id="RHEA:17989"/>
        <dbReference type="Rhea" id="RHEA-COMP:9863"/>
        <dbReference type="Rhea" id="RHEA-COMP:11604"/>
        <dbReference type="ChEBI" id="CHEBI:15378"/>
        <dbReference type="ChEBI" id="CHEBI:29999"/>
        <dbReference type="ChEBI" id="CHEBI:30616"/>
        <dbReference type="ChEBI" id="CHEBI:83421"/>
        <dbReference type="ChEBI" id="CHEBI:456216"/>
        <dbReference type="EC" id="2.7.11.22"/>
    </reaction>
</comment>
<comment type="catalytic activity">
    <reaction evidence="3">
        <text>L-threonyl-[protein] + ATP = O-phospho-L-threonyl-[protein] + ADP + H(+)</text>
        <dbReference type="Rhea" id="RHEA:46608"/>
        <dbReference type="Rhea" id="RHEA-COMP:11060"/>
        <dbReference type="Rhea" id="RHEA-COMP:11605"/>
        <dbReference type="ChEBI" id="CHEBI:15378"/>
        <dbReference type="ChEBI" id="CHEBI:30013"/>
        <dbReference type="ChEBI" id="CHEBI:30616"/>
        <dbReference type="ChEBI" id="CHEBI:61977"/>
        <dbReference type="ChEBI" id="CHEBI:456216"/>
        <dbReference type="EC" id="2.7.11.22"/>
    </reaction>
</comment>
<comment type="catalytic activity">
    <reaction evidence="3">
        <text>[DNA-directed RNA polymerase] + ATP = phospho-[DNA-directed RNA polymerase] + ADP + H(+)</text>
        <dbReference type="Rhea" id="RHEA:10216"/>
        <dbReference type="Rhea" id="RHEA-COMP:11321"/>
        <dbReference type="Rhea" id="RHEA-COMP:11322"/>
        <dbReference type="ChEBI" id="CHEBI:15378"/>
        <dbReference type="ChEBI" id="CHEBI:30616"/>
        <dbReference type="ChEBI" id="CHEBI:43176"/>
        <dbReference type="ChEBI" id="CHEBI:68546"/>
        <dbReference type="ChEBI" id="CHEBI:456216"/>
        <dbReference type="EC" id="2.7.11.23"/>
    </reaction>
</comment>
<comment type="cofactor">
    <cofactor evidence="3">
        <name>Mg(2+)</name>
        <dbReference type="ChEBI" id="CHEBI:18420"/>
    </cofactor>
</comment>
<comment type="activity regulation">
    <text evidence="2">Phosphorylation at Thr-14 or Tyr-15 inactivates the enzyme, while phosphorylation at Thr-158 activates it.</text>
</comment>
<comment type="subunit">
    <text evidence="3">May form a complex composed of at least the catalytic subunit CRK2 and a cyclin.</text>
</comment>
<comment type="subcellular location">
    <subcellularLocation>
        <location evidence="1">Cytoplasm</location>
    </subcellularLocation>
</comment>
<comment type="similarity">
    <text evidence="7">Belongs to the protein kinase superfamily. CMGC Ser/Thr protein kinase family. CDC2/CDKX subfamily.</text>
</comment>
<name>CDK2H_PLAVI</name>
<dbReference type="EC" id="2.7.11.22" evidence="3"/>
<dbReference type="EC" id="2.7.11.23" evidence="3"/>
<dbReference type="EMBL" id="AF136377">
    <property type="protein sequence ID" value="AAD29423.1"/>
    <property type="molecule type" value="Genomic_DNA"/>
</dbReference>
<dbReference type="RefSeq" id="XP_001616353.1">
    <property type="nucleotide sequence ID" value="XM_001616303.1"/>
</dbReference>
<dbReference type="SMR" id="Q9XZD6"/>
<dbReference type="KEGG" id="pvx:PVX_114825"/>
<dbReference type="VEuPathDB" id="PlasmoDB:PVP01_1115000"/>
<dbReference type="VEuPathDB" id="PlasmoDB:PVPAM_110019000"/>
<dbReference type="VEuPathDB" id="PlasmoDB:PVW1_110020500"/>
<dbReference type="VEuPathDB" id="PlasmoDB:PVX_114825"/>
<dbReference type="eggNOG" id="KOG0594">
    <property type="taxonomic scope" value="Eukaryota"/>
</dbReference>
<dbReference type="HOGENOM" id="CLU_000288_181_1_1"/>
<dbReference type="OMA" id="YLYQITR"/>
<dbReference type="OrthoDB" id="1732493at2759"/>
<dbReference type="GO" id="GO:0005737">
    <property type="term" value="C:cytoplasm"/>
    <property type="evidence" value="ECO:0007669"/>
    <property type="project" value="UniProtKB-SubCell"/>
</dbReference>
<dbReference type="GO" id="GO:0005634">
    <property type="term" value="C:nucleus"/>
    <property type="evidence" value="ECO:0007669"/>
    <property type="project" value="TreeGrafter"/>
</dbReference>
<dbReference type="GO" id="GO:0005524">
    <property type="term" value="F:ATP binding"/>
    <property type="evidence" value="ECO:0007669"/>
    <property type="project" value="UniProtKB-KW"/>
</dbReference>
<dbReference type="GO" id="GO:0004693">
    <property type="term" value="F:cyclin-dependent protein serine/threonine kinase activity"/>
    <property type="evidence" value="ECO:0007669"/>
    <property type="project" value="UniProtKB-EC"/>
</dbReference>
<dbReference type="GO" id="GO:0046872">
    <property type="term" value="F:metal ion binding"/>
    <property type="evidence" value="ECO:0007669"/>
    <property type="project" value="UniProtKB-KW"/>
</dbReference>
<dbReference type="GO" id="GO:0106310">
    <property type="term" value="F:protein serine kinase activity"/>
    <property type="evidence" value="ECO:0007669"/>
    <property type="project" value="RHEA"/>
</dbReference>
<dbReference type="GO" id="GO:0008353">
    <property type="term" value="F:RNA polymerase II CTD heptapeptide repeat kinase activity"/>
    <property type="evidence" value="ECO:0007669"/>
    <property type="project" value="UniProtKB-EC"/>
</dbReference>
<dbReference type="GO" id="GO:0051301">
    <property type="term" value="P:cell division"/>
    <property type="evidence" value="ECO:0007669"/>
    <property type="project" value="UniProtKB-KW"/>
</dbReference>
<dbReference type="CDD" id="cd07829">
    <property type="entry name" value="STKc_CDK_like"/>
    <property type="match status" value="1"/>
</dbReference>
<dbReference type="FunFam" id="3.30.200.20:FF:000396">
    <property type="entry name" value="Cdc2-related kinase 2, putative"/>
    <property type="match status" value="1"/>
</dbReference>
<dbReference type="FunFam" id="1.10.510.10:FF:000184">
    <property type="entry name" value="cyclin-dependent kinase 5 homolog"/>
    <property type="match status" value="1"/>
</dbReference>
<dbReference type="Gene3D" id="3.30.200.20">
    <property type="entry name" value="Phosphorylase Kinase, domain 1"/>
    <property type="match status" value="1"/>
</dbReference>
<dbReference type="Gene3D" id="1.10.510.10">
    <property type="entry name" value="Transferase(Phosphotransferase) domain 1"/>
    <property type="match status" value="1"/>
</dbReference>
<dbReference type="InterPro" id="IPR050108">
    <property type="entry name" value="CDK"/>
</dbReference>
<dbReference type="InterPro" id="IPR011009">
    <property type="entry name" value="Kinase-like_dom_sf"/>
</dbReference>
<dbReference type="InterPro" id="IPR000719">
    <property type="entry name" value="Prot_kinase_dom"/>
</dbReference>
<dbReference type="InterPro" id="IPR017441">
    <property type="entry name" value="Protein_kinase_ATP_BS"/>
</dbReference>
<dbReference type="InterPro" id="IPR008271">
    <property type="entry name" value="Ser/Thr_kinase_AS"/>
</dbReference>
<dbReference type="PANTHER" id="PTHR24056">
    <property type="entry name" value="CELL DIVISION PROTEIN KINASE"/>
    <property type="match status" value="1"/>
</dbReference>
<dbReference type="PANTHER" id="PTHR24056:SF46">
    <property type="entry name" value="CYCLIN-DEPENDENT KINASE 5"/>
    <property type="match status" value="1"/>
</dbReference>
<dbReference type="Pfam" id="PF00069">
    <property type="entry name" value="Pkinase"/>
    <property type="match status" value="1"/>
</dbReference>
<dbReference type="SMART" id="SM00220">
    <property type="entry name" value="S_TKc"/>
    <property type="match status" value="1"/>
</dbReference>
<dbReference type="SUPFAM" id="SSF56112">
    <property type="entry name" value="Protein kinase-like (PK-like)"/>
    <property type="match status" value="1"/>
</dbReference>
<dbReference type="PROSITE" id="PS00107">
    <property type="entry name" value="PROTEIN_KINASE_ATP"/>
    <property type="match status" value="1"/>
</dbReference>
<dbReference type="PROSITE" id="PS50011">
    <property type="entry name" value="PROTEIN_KINASE_DOM"/>
    <property type="match status" value="1"/>
</dbReference>
<dbReference type="PROSITE" id="PS00108">
    <property type="entry name" value="PROTEIN_KINASE_ST"/>
    <property type="match status" value="1"/>
</dbReference>
<reference key="1">
    <citation type="journal article" date="2001" name="Exp. Parasitol.">
        <title>Primary structure of the Plasmodium vivax crk2 gene and interference of the yeast cell cycle upon its conditional expression.</title>
        <authorList>
            <person name="Speranca M.A."/>
            <person name="Vinkenoog R."/>
            <person name="Ocampos M."/>
            <person name="Fischer K."/>
            <person name="Janse C.J."/>
            <person name="Waters A.P."/>
            <person name="del Portillo H.A."/>
        </authorList>
    </citation>
    <scope>NUCLEOTIDE SEQUENCE [GENOMIC DNA]</scope>
</reference>
<sequence length="288" mass="33094">MEKYHGLEKIGEGTYGVVYKAQNNYGETFALKKIRLEKEDEGIPSTAIREISILKELKHSNIVKLYDVIHTKKRLILVFEHLDQDLKKLLDVCDGGLESVTAKSFLLQLLSGIAYCHEHRVLHRDLKPQNLLINREGELKIADFGLARAFGIPVRKYTHEVVTLWYRAPDILMGSKKYSTPIDMWSVGCIFAEMVNGRPLFPGVSETDQLMRIFRILGTPNSENWPNVTELPKYDPDFMVYEPLPWETFLKGLDDTGIDLLSKMLRLDPNQRITAKQALEHAYFKESN</sequence>
<protein>
    <recommendedName>
        <fullName evidence="7">Cyclin-dependent kinase 2 homolog</fullName>
        <ecNumber evidence="3">2.7.11.22</ecNumber>
        <ecNumber evidence="3">2.7.11.23</ecNumber>
    </recommendedName>
    <alternativeName>
        <fullName evidence="3">Cell division control protein 2 homolog</fullName>
    </alternativeName>
    <alternativeName>
        <fullName evidence="6">Pvcrk2</fullName>
    </alternativeName>
    <alternativeName>
        <fullName evidence="6">cdc2-related kinase 2</fullName>
    </alternativeName>
</protein>
<accession>Q9XZD6</accession>
<proteinExistence type="inferred from homology"/>
<organism>
    <name type="scientific">Plasmodium vivax</name>
    <dbReference type="NCBI Taxonomy" id="5855"/>
    <lineage>
        <taxon>Eukaryota</taxon>
        <taxon>Sar</taxon>
        <taxon>Alveolata</taxon>
        <taxon>Apicomplexa</taxon>
        <taxon>Aconoidasida</taxon>
        <taxon>Haemosporida</taxon>
        <taxon>Plasmodiidae</taxon>
        <taxon>Plasmodium</taxon>
        <taxon>Plasmodium (Plasmodium)</taxon>
    </lineage>
</organism>
<gene>
    <name evidence="6" type="primary">CRK2</name>
</gene>
<feature type="chain" id="PRO_0000232671" description="Cyclin-dependent kinase 2 homolog">
    <location>
        <begin position="1"/>
        <end position="288"/>
    </location>
</feature>
<feature type="domain" description="Protein kinase" evidence="4">
    <location>
        <begin position="4"/>
        <end position="284"/>
    </location>
</feature>
<feature type="active site" description="Proton acceptor" evidence="4 5">
    <location>
        <position position="125"/>
    </location>
</feature>
<feature type="binding site" evidence="4">
    <location>
        <begin position="10"/>
        <end position="18"/>
    </location>
    <ligand>
        <name>ATP</name>
        <dbReference type="ChEBI" id="CHEBI:30616"/>
    </ligand>
</feature>
<feature type="binding site" evidence="4">
    <location>
        <position position="32"/>
    </location>
    <ligand>
        <name>ATP</name>
        <dbReference type="ChEBI" id="CHEBI:30616"/>
    </ligand>
</feature>
<feature type="modified residue" description="Phosphothreonine" evidence="2">
    <location>
        <position position="14"/>
    </location>
</feature>
<feature type="modified residue" description="Phosphotyrosine" evidence="2">
    <location>
        <position position="15"/>
    </location>
</feature>
<feature type="modified residue" description="Phosphothreonine" evidence="2">
    <location>
        <position position="158"/>
    </location>
</feature>
<evidence type="ECO:0000250" key="1">
    <source>
        <dbReference type="UniProtKB" id="P04551"/>
    </source>
</evidence>
<evidence type="ECO:0000250" key="2">
    <source>
        <dbReference type="UniProtKB" id="P24941"/>
    </source>
</evidence>
<evidence type="ECO:0000250" key="3">
    <source>
        <dbReference type="UniProtKB" id="P61075"/>
    </source>
</evidence>
<evidence type="ECO:0000255" key="4">
    <source>
        <dbReference type="PROSITE-ProRule" id="PRU00159"/>
    </source>
</evidence>
<evidence type="ECO:0000255" key="5">
    <source>
        <dbReference type="PROSITE-ProRule" id="PRU10027"/>
    </source>
</evidence>
<evidence type="ECO:0000303" key="6">
    <source>
    </source>
</evidence>
<evidence type="ECO:0000305" key="7"/>
<keyword id="KW-0067">ATP-binding</keyword>
<keyword id="KW-0131">Cell cycle</keyword>
<keyword id="KW-0132">Cell division</keyword>
<keyword id="KW-0963">Cytoplasm</keyword>
<keyword id="KW-0418">Kinase</keyword>
<keyword id="KW-0460">Magnesium</keyword>
<keyword id="KW-0479">Metal-binding</keyword>
<keyword id="KW-0498">Mitosis</keyword>
<keyword id="KW-0547">Nucleotide-binding</keyword>
<keyword id="KW-0597">Phosphoprotein</keyword>
<keyword id="KW-0723">Serine/threonine-protein kinase</keyword>
<keyword id="KW-0808">Transferase</keyword>